<gene>
    <name evidence="1" type="primary">fadB</name>
    <name type="ordered locus">Sbal_0021</name>
</gene>
<sequence length="716" mass="76733">MIYQSPTIQVELLEDNIAKLCFNAPGSVNKFDRETLTSLDAALDSIKQDSNIKALVLTSSKDTFIVGADITEFLGLFAQDDAVLLSWVEQANAVFNKLEDLPFPTASAIKGFALGGGCETILATDFRIADTTAKIGLPETKLGIIPGFGGTVRLPRVIGADNALEWITTGKDQRAEDALKVGAVDAVVAPQALEAAAIQMLKDAVAEKLDWQARRNRKLSALTLPKLEAMMSFTTAKGMVFAVAGKHYPAPMAAVSVIEQASTKGRAEALQIEHQAFIKLAKTDVAKALIGIFLNDQFVKGKAKKAGKLAKEVNNAAVLGAGIMGGGIAYQSASKGTPIVMKDIAQPALDLGLNEAAKLLSAQVARGRSTPEKMAKVLNNITPSLDYAAIKHSDVVVEAVVEHPKIKAQVLAEVEGYVSEDAIIASNTSTISINLLAKSMKKPERFCGMHFFNPVHKMPLVEIIRGEHSSEETIASVVAYASKMGKTPIVVNDCPGFFVNRVLFPYFAGFNGLLAEGGDFAAIDKVMEKQFGWPMGPAYLLDVVGLDTGHHAQAVMAEGFPDRMGKSGTDAIDVMFENKRLGQKNGKGFYVYSVDSRGKPKKDVDPTSYGLLKDAFGELKAFEADDIIARTMIPMIIETVRCLEEGIVASPAEADMGLVYGLGFPPFRGGVFRYLDTMGVANFVALADKYAHLGGLYQVTDAMRTLAANNGSYYQA</sequence>
<comment type="function">
    <text evidence="1">Involved in the aerobic and anaerobic degradation of long-chain fatty acids via beta-oxidation cycle. Catalyzes the formation of 3-oxoacyl-CoA from enoyl-CoA via L-3-hydroxyacyl-CoA. It can also use D-3-hydroxyacyl-CoA and cis-3-enoyl-CoA as substrate.</text>
</comment>
<comment type="catalytic activity">
    <reaction evidence="1">
        <text>a (3S)-3-hydroxyacyl-CoA + NAD(+) = a 3-oxoacyl-CoA + NADH + H(+)</text>
        <dbReference type="Rhea" id="RHEA:22432"/>
        <dbReference type="ChEBI" id="CHEBI:15378"/>
        <dbReference type="ChEBI" id="CHEBI:57318"/>
        <dbReference type="ChEBI" id="CHEBI:57540"/>
        <dbReference type="ChEBI" id="CHEBI:57945"/>
        <dbReference type="ChEBI" id="CHEBI:90726"/>
        <dbReference type="EC" id="1.1.1.35"/>
    </reaction>
</comment>
<comment type="catalytic activity">
    <reaction evidence="1">
        <text>a (3S)-3-hydroxyacyl-CoA = a (2E)-enoyl-CoA + H2O</text>
        <dbReference type="Rhea" id="RHEA:16105"/>
        <dbReference type="ChEBI" id="CHEBI:15377"/>
        <dbReference type="ChEBI" id="CHEBI:57318"/>
        <dbReference type="ChEBI" id="CHEBI:58856"/>
        <dbReference type="EC" id="4.2.1.17"/>
    </reaction>
</comment>
<comment type="catalytic activity">
    <reaction evidence="1">
        <text>a 4-saturated-(3S)-3-hydroxyacyl-CoA = a (3E)-enoyl-CoA + H2O</text>
        <dbReference type="Rhea" id="RHEA:20724"/>
        <dbReference type="ChEBI" id="CHEBI:15377"/>
        <dbReference type="ChEBI" id="CHEBI:58521"/>
        <dbReference type="ChEBI" id="CHEBI:137480"/>
        <dbReference type="EC" id="4.2.1.17"/>
    </reaction>
</comment>
<comment type="catalytic activity">
    <reaction evidence="1">
        <text>(3S)-3-hydroxybutanoyl-CoA = (3R)-3-hydroxybutanoyl-CoA</text>
        <dbReference type="Rhea" id="RHEA:21760"/>
        <dbReference type="ChEBI" id="CHEBI:57315"/>
        <dbReference type="ChEBI" id="CHEBI:57316"/>
        <dbReference type="EC" id="5.1.2.3"/>
    </reaction>
</comment>
<comment type="catalytic activity">
    <reaction evidence="1">
        <text>a (3Z)-enoyl-CoA = a 4-saturated (2E)-enoyl-CoA</text>
        <dbReference type="Rhea" id="RHEA:45900"/>
        <dbReference type="ChEBI" id="CHEBI:85097"/>
        <dbReference type="ChEBI" id="CHEBI:85489"/>
        <dbReference type="EC" id="5.3.3.8"/>
    </reaction>
</comment>
<comment type="catalytic activity">
    <reaction evidence="1">
        <text>a (3E)-enoyl-CoA = a 4-saturated (2E)-enoyl-CoA</text>
        <dbReference type="Rhea" id="RHEA:45228"/>
        <dbReference type="ChEBI" id="CHEBI:58521"/>
        <dbReference type="ChEBI" id="CHEBI:85097"/>
        <dbReference type="EC" id="5.3.3.8"/>
    </reaction>
</comment>
<comment type="pathway">
    <text evidence="1">Lipid metabolism; fatty acid beta-oxidation.</text>
</comment>
<comment type="subunit">
    <text evidence="1">Heterotetramer of two alpha chains (FadB) and two beta chains (FadA).</text>
</comment>
<comment type="similarity">
    <text evidence="1">In the N-terminal section; belongs to the enoyl-CoA hydratase/isomerase family.</text>
</comment>
<comment type="similarity">
    <text evidence="1">In the C-terminal section; belongs to the 3-hydroxyacyl-CoA dehydrogenase family.</text>
</comment>
<protein>
    <recommendedName>
        <fullName evidence="1">Fatty acid oxidation complex subunit alpha</fullName>
    </recommendedName>
    <domain>
        <recommendedName>
            <fullName evidence="1">Enoyl-CoA hydratase/Delta(3)-cis-Delta(2)-trans-enoyl-CoA isomerase/3-hydroxybutyryl-CoA epimerase</fullName>
            <ecNumber evidence="1">4.2.1.17</ecNumber>
            <ecNumber evidence="1">5.1.2.3</ecNumber>
            <ecNumber evidence="1">5.3.3.8</ecNumber>
        </recommendedName>
    </domain>
    <domain>
        <recommendedName>
            <fullName evidence="1">3-hydroxyacyl-CoA dehydrogenase</fullName>
            <ecNumber evidence="1">1.1.1.35</ecNumber>
        </recommendedName>
    </domain>
</protein>
<dbReference type="EC" id="4.2.1.17" evidence="1"/>
<dbReference type="EC" id="5.1.2.3" evidence="1"/>
<dbReference type="EC" id="5.3.3.8" evidence="1"/>
<dbReference type="EC" id="1.1.1.35" evidence="1"/>
<dbReference type="EMBL" id="CP000563">
    <property type="protein sequence ID" value="ABN59557.1"/>
    <property type="molecule type" value="Genomic_DNA"/>
</dbReference>
<dbReference type="RefSeq" id="WP_011845347.1">
    <property type="nucleotide sequence ID" value="NC_009052.1"/>
</dbReference>
<dbReference type="SMR" id="A3CYJ4"/>
<dbReference type="STRING" id="325240.Sbal_0021"/>
<dbReference type="KEGG" id="sbl:Sbal_0021"/>
<dbReference type="HOGENOM" id="CLU_009834_16_3_6"/>
<dbReference type="OrthoDB" id="5389341at2"/>
<dbReference type="UniPathway" id="UPA00659"/>
<dbReference type="Proteomes" id="UP000001557">
    <property type="component" value="Chromosome"/>
</dbReference>
<dbReference type="GO" id="GO:0036125">
    <property type="term" value="C:fatty acid beta-oxidation multienzyme complex"/>
    <property type="evidence" value="ECO:0007669"/>
    <property type="project" value="InterPro"/>
</dbReference>
<dbReference type="GO" id="GO:0008692">
    <property type="term" value="F:3-hydroxybutyryl-CoA epimerase activity"/>
    <property type="evidence" value="ECO:0007669"/>
    <property type="project" value="UniProtKB-UniRule"/>
</dbReference>
<dbReference type="GO" id="GO:0004165">
    <property type="term" value="F:delta(3)-delta(2)-enoyl-CoA isomerase activity"/>
    <property type="evidence" value="ECO:0007669"/>
    <property type="project" value="UniProtKB-UniRule"/>
</dbReference>
<dbReference type="GO" id="GO:0004300">
    <property type="term" value="F:enoyl-CoA hydratase activity"/>
    <property type="evidence" value="ECO:0007669"/>
    <property type="project" value="UniProtKB-UniRule"/>
</dbReference>
<dbReference type="GO" id="GO:0016509">
    <property type="term" value="F:long-chain-3-hydroxyacyl-CoA dehydrogenase activity"/>
    <property type="evidence" value="ECO:0007669"/>
    <property type="project" value="TreeGrafter"/>
</dbReference>
<dbReference type="GO" id="GO:0070403">
    <property type="term" value="F:NAD+ binding"/>
    <property type="evidence" value="ECO:0007669"/>
    <property type="project" value="InterPro"/>
</dbReference>
<dbReference type="GO" id="GO:0006635">
    <property type="term" value="P:fatty acid beta-oxidation"/>
    <property type="evidence" value="ECO:0007669"/>
    <property type="project" value="UniProtKB-UniRule"/>
</dbReference>
<dbReference type="CDD" id="cd06558">
    <property type="entry name" value="crotonase-like"/>
    <property type="match status" value="1"/>
</dbReference>
<dbReference type="FunFam" id="1.10.1040.50:FF:000001">
    <property type="entry name" value="Fatty acid oxidation complex subunit alpha"/>
    <property type="match status" value="1"/>
</dbReference>
<dbReference type="FunFam" id="3.40.50.720:FF:000009">
    <property type="entry name" value="Fatty oxidation complex, alpha subunit"/>
    <property type="match status" value="1"/>
</dbReference>
<dbReference type="Gene3D" id="1.10.1040.50">
    <property type="match status" value="1"/>
</dbReference>
<dbReference type="Gene3D" id="3.90.226.10">
    <property type="entry name" value="2-enoyl-CoA Hydratase, Chain A, domain 1"/>
    <property type="match status" value="1"/>
</dbReference>
<dbReference type="Gene3D" id="3.40.50.720">
    <property type="entry name" value="NAD(P)-binding Rossmann-like Domain"/>
    <property type="match status" value="1"/>
</dbReference>
<dbReference type="HAMAP" id="MF_01621">
    <property type="entry name" value="FadB"/>
    <property type="match status" value="1"/>
</dbReference>
<dbReference type="InterPro" id="IPR006180">
    <property type="entry name" value="3-OHacyl-CoA_DH_CS"/>
</dbReference>
<dbReference type="InterPro" id="IPR006176">
    <property type="entry name" value="3-OHacyl-CoA_DH_NAD-bd"/>
</dbReference>
<dbReference type="InterPro" id="IPR006108">
    <property type="entry name" value="3HC_DH_C"/>
</dbReference>
<dbReference type="InterPro" id="IPR008927">
    <property type="entry name" value="6-PGluconate_DH-like_C_sf"/>
</dbReference>
<dbReference type="InterPro" id="IPR029045">
    <property type="entry name" value="ClpP/crotonase-like_dom_sf"/>
</dbReference>
<dbReference type="InterPro" id="IPR001753">
    <property type="entry name" value="Enoyl-CoA_hydra/iso"/>
</dbReference>
<dbReference type="InterPro" id="IPR050136">
    <property type="entry name" value="FA_oxidation_alpha_subunit"/>
</dbReference>
<dbReference type="InterPro" id="IPR012799">
    <property type="entry name" value="FadB"/>
</dbReference>
<dbReference type="InterPro" id="IPR036291">
    <property type="entry name" value="NAD(P)-bd_dom_sf"/>
</dbReference>
<dbReference type="NCBIfam" id="TIGR02437">
    <property type="entry name" value="FadB"/>
    <property type="match status" value="1"/>
</dbReference>
<dbReference type="NCBIfam" id="NF008727">
    <property type="entry name" value="PRK11730.1"/>
    <property type="match status" value="1"/>
</dbReference>
<dbReference type="PANTHER" id="PTHR43612">
    <property type="entry name" value="TRIFUNCTIONAL ENZYME SUBUNIT ALPHA"/>
    <property type="match status" value="1"/>
</dbReference>
<dbReference type="PANTHER" id="PTHR43612:SF3">
    <property type="entry name" value="TRIFUNCTIONAL ENZYME SUBUNIT ALPHA, MITOCHONDRIAL"/>
    <property type="match status" value="1"/>
</dbReference>
<dbReference type="Pfam" id="PF00725">
    <property type="entry name" value="3HCDH"/>
    <property type="match status" value="1"/>
</dbReference>
<dbReference type="Pfam" id="PF02737">
    <property type="entry name" value="3HCDH_N"/>
    <property type="match status" value="1"/>
</dbReference>
<dbReference type="Pfam" id="PF00378">
    <property type="entry name" value="ECH_1"/>
    <property type="match status" value="1"/>
</dbReference>
<dbReference type="SUPFAM" id="SSF48179">
    <property type="entry name" value="6-phosphogluconate dehydrogenase C-terminal domain-like"/>
    <property type="match status" value="2"/>
</dbReference>
<dbReference type="SUPFAM" id="SSF52096">
    <property type="entry name" value="ClpP/crotonase"/>
    <property type="match status" value="1"/>
</dbReference>
<dbReference type="SUPFAM" id="SSF51735">
    <property type="entry name" value="NAD(P)-binding Rossmann-fold domains"/>
    <property type="match status" value="1"/>
</dbReference>
<dbReference type="PROSITE" id="PS00067">
    <property type="entry name" value="3HCDH"/>
    <property type="match status" value="1"/>
</dbReference>
<reference key="1">
    <citation type="submission" date="2007-02" db="EMBL/GenBank/DDBJ databases">
        <title>Complete sequence of chromosome of Shewanella baltica OS155.</title>
        <authorList>
            <consortium name="US DOE Joint Genome Institute"/>
            <person name="Copeland A."/>
            <person name="Lucas S."/>
            <person name="Lapidus A."/>
            <person name="Barry K."/>
            <person name="Detter J.C."/>
            <person name="Glavina del Rio T."/>
            <person name="Hammon N."/>
            <person name="Israni S."/>
            <person name="Dalin E."/>
            <person name="Tice H."/>
            <person name="Pitluck S."/>
            <person name="Sims D.R."/>
            <person name="Brettin T."/>
            <person name="Bruce D."/>
            <person name="Han C."/>
            <person name="Tapia R."/>
            <person name="Brainard J."/>
            <person name="Schmutz J."/>
            <person name="Larimer F."/>
            <person name="Land M."/>
            <person name="Hauser L."/>
            <person name="Kyrpides N."/>
            <person name="Mikhailova N."/>
            <person name="Brettar I."/>
            <person name="Klappenbach J."/>
            <person name="Konstantinidis K."/>
            <person name="Rodrigues J."/>
            <person name="Tiedje J."/>
            <person name="Richardson P."/>
        </authorList>
    </citation>
    <scope>NUCLEOTIDE SEQUENCE [LARGE SCALE GENOMIC DNA]</scope>
    <source>
        <strain>OS155 / ATCC BAA-1091</strain>
    </source>
</reference>
<feature type="chain" id="PRO_1000069573" description="Fatty acid oxidation complex subunit alpha">
    <location>
        <begin position="1"/>
        <end position="716"/>
    </location>
</feature>
<feature type="region of interest" description="Enoyl-CoA hydratase/isomerase" evidence="1">
    <location>
        <begin position="1"/>
        <end position="189"/>
    </location>
</feature>
<feature type="region of interest" description="3-hydroxyacyl-CoA dehydrogenase" evidence="1">
    <location>
        <begin position="311"/>
        <end position="716"/>
    </location>
</feature>
<feature type="active site" description="For 3-hydroxyacyl-CoA dehydrogenase activity" evidence="1">
    <location>
        <position position="450"/>
    </location>
</feature>
<feature type="binding site" evidence="1">
    <location>
        <position position="296"/>
    </location>
    <ligand>
        <name>substrate</name>
    </ligand>
</feature>
<feature type="binding site" evidence="1">
    <location>
        <position position="324"/>
    </location>
    <ligand>
        <name>NAD(+)</name>
        <dbReference type="ChEBI" id="CHEBI:57540"/>
    </ligand>
</feature>
<feature type="binding site" evidence="1">
    <location>
        <position position="343"/>
    </location>
    <ligand>
        <name>NAD(+)</name>
        <dbReference type="ChEBI" id="CHEBI:57540"/>
    </ligand>
</feature>
<feature type="binding site" evidence="1">
    <location>
        <begin position="400"/>
        <end position="402"/>
    </location>
    <ligand>
        <name>NAD(+)</name>
        <dbReference type="ChEBI" id="CHEBI:57540"/>
    </ligand>
</feature>
<feature type="binding site" evidence="1">
    <location>
        <position position="407"/>
    </location>
    <ligand>
        <name>NAD(+)</name>
        <dbReference type="ChEBI" id="CHEBI:57540"/>
    </ligand>
</feature>
<feature type="binding site" evidence="1">
    <location>
        <position position="429"/>
    </location>
    <ligand>
        <name>NAD(+)</name>
        <dbReference type="ChEBI" id="CHEBI:57540"/>
    </ligand>
</feature>
<feature type="binding site" evidence="1">
    <location>
        <position position="453"/>
    </location>
    <ligand>
        <name>NAD(+)</name>
        <dbReference type="ChEBI" id="CHEBI:57540"/>
    </ligand>
</feature>
<feature type="binding site" evidence="1">
    <location>
        <position position="500"/>
    </location>
    <ligand>
        <name>substrate</name>
    </ligand>
</feature>
<feature type="binding site" evidence="1">
    <location>
        <position position="660"/>
    </location>
    <ligand>
        <name>substrate</name>
    </ligand>
</feature>
<feature type="site" description="Important for catalytic activity" evidence="1">
    <location>
        <position position="119"/>
    </location>
</feature>
<feature type="site" description="Important for catalytic activity" evidence="1">
    <location>
        <position position="139"/>
    </location>
</feature>
<accession>A3CYJ4</accession>
<proteinExistence type="inferred from homology"/>
<evidence type="ECO:0000255" key="1">
    <source>
        <dbReference type="HAMAP-Rule" id="MF_01621"/>
    </source>
</evidence>
<keyword id="KW-0276">Fatty acid metabolism</keyword>
<keyword id="KW-0413">Isomerase</keyword>
<keyword id="KW-0442">Lipid degradation</keyword>
<keyword id="KW-0443">Lipid metabolism</keyword>
<keyword id="KW-0456">Lyase</keyword>
<keyword id="KW-0511">Multifunctional enzyme</keyword>
<keyword id="KW-0520">NAD</keyword>
<keyword id="KW-0560">Oxidoreductase</keyword>
<keyword id="KW-1185">Reference proteome</keyword>
<organism>
    <name type="scientific">Shewanella baltica (strain OS155 / ATCC BAA-1091)</name>
    <dbReference type="NCBI Taxonomy" id="325240"/>
    <lineage>
        <taxon>Bacteria</taxon>
        <taxon>Pseudomonadati</taxon>
        <taxon>Pseudomonadota</taxon>
        <taxon>Gammaproteobacteria</taxon>
        <taxon>Alteromonadales</taxon>
        <taxon>Shewanellaceae</taxon>
        <taxon>Shewanella</taxon>
    </lineage>
</organism>
<name>FADB_SHEB5</name>